<accession>Q2IX91</accession>
<comment type="function">
    <text evidence="1">Binds together with bS18 to 16S ribosomal RNA.</text>
</comment>
<comment type="similarity">
    <text evidence="1">Belongs to the bacterial ribosomal protein bS6 family.</text>
</comment>
<name>RS6_RHOP2</name>
<feature type="chain" id="PRO_1000005329" description="Small ribosomal subunit protein bS6">
    <location>
        <begin position="1"/>
        <end position="159"/>
    </location>
</feature>
<feature type="region of interest" description="Disordered" evidence="2">
    <location>
        <begin position="93"/>
        <end position="159"/>
    </location>
</feature>
<feature type="compositionally biased region" description="Basic and acidic residues" evidence="2">
    <location>
        <begin position="93"/>
        <end position="151"/>
    </location>
</feature>
<evidence type="ECO:0000255" key="1">
    <source>
        <dbReference type="HAMAP-Rule" id="MF_00360"/>
    </source>
</evidence>
<evidence type="ECO:0000256" key="2">
    <source>
        <dbReference type="SAM" id="MobiDB-lite"/>
    </source>
</evidence>
<evidence type="ECO:0000305" key="3"/>
<keyword id="KW-1185">Reference proteome</keyword>
<keyword id="KW-0687">Ribonucleoprotein</keyword>
<keyword id="KW-0689">Ribosomal protein</keyword>
<keyword id="KW-0694">RNA-binding</keyword>
<keyword id="KW-0699">rRNA-binding</keyword>
<protein>
    <recommendedName>
        <fullName evidence="1">Small ribosomal subunit protein bS6</fullName>
    </recommendedName>
    <alternativeName>
        <fullName evidence="3">30S ribosomal protein S6</fullName>
    </alternativeName>
</protein>
<proteinExistence type="inferred from homology"/>
<gene>
    <name evidence="1" type="primary">rpsF</name>
    <name type="ordered locus">RPB_2464</name>
</gene>
<sequence>MPLYEHVFLARQDASTQQVEELTTQITGVIEGLGGKVTKTEAWGLRSLTYRMNKNRKAHFVLLNIDGPSAVVSEIERQERINEDIVRYLTVRVDEHEEGPSAMMRKADRDRERDDRGPREGGFRGDREGRGDREGGGFRGDRGPRRPREDADTAAASEE</sequence>
<organism>
    <name type="scientific">Rhodopseudomonas palustris (strain HaA2)</name>
    <dbReference type="NCBI Taxonomy" id="316058"/>
    <lineage>
        <taxon>Bacteria</taxon>
        <taxon>Pseudomonadati</taxon>
        <taxon>Pseudomonadota</taxon>
        <taxon>Alphaproteobacteria</taxon>
        <taxon>Hyphomicrobiales</taxon>
        <taxon>Nitrobacteraceae</taxon>
        <taxon>Rhodopseudomonas</taxon>
    </lineage>
</organism>
<reference key="1">
    <citation type="submission" date="2006-01" db="EMBL/GenBank/DDBJ databases">
        <title>Complete sequence of Rhodopseudomonas palustris HaA2.</title>
        <authorList>
            <consortium name="US DOE Joint Genome Institute"/>
            <person name="Copeland A."/>
            <person name="Lucas S."/>
            <person name="Lapidus A."/>
            <person name="Barry K."/>
            <person name="Detter J.C."/>
            <person name="Glavina T."/>
            <person name="Hammon N."/>
            <person name="Israni S."/>
            <person name="Pitluck S."/>
            <person name="Chain P."/>
            <person name="Malfatti S."/>
            <person name="Shin M."/>
            <person name="Vergez L."/>
            <person name="Schmutz J."/>
            <person name="Larimer F."/>
            <person name="Land M."/>
            <person name="Hauser L."/>
            <person name="Pelletier D.A."/>
            <person name="Kyrpides N."/>
            <person name="Anderson I."/>
            <person name="Oda Y."/>
            <person name="Harwood C.S."/>
            <person name="Richardson P."/>
        </authorList>
    </citation>
    <scope>NUCLEOTIDE SEQUENCE [LARGE SCALE GENOMIC DNA]</scope>
    <source>
        <strain>HaA2</strain>
    </source>
</reference>
<dbReference type="EMBL" id="CP000250">
    <property type="protein sequence ID" value="ABD07169.1"/>
    <property type="molecule type" value="Genomic_DNA"/>
</dbReference>
<dbReference type="RefSeq" id="WP_011441354.1">
    <property type="nucleotide sequence ID" value="NC_007778.1"/>
</dbReference>
<dbReference type="SMR" id="Q2IX91"/>
<dbReference type="STRING" id="316058.RPB_2464"/>
<dbReference type="KEGG" id="rpb:RPB_2464"/>
<dbReference type="eggNOG" id="COG0360">
    <property type="taxonomic scope" value="Bacteria"/>
</dbReference>
<dbReference type="HOGENOM" id="CLU_113441_2_0_5"/>
<dbReference type="OrthoDB" id="9812702at2"/>
<dbReference type="Proteomes" id="UP000008809">
    <property type="component" value="Chromosome"/>
</dbReference>
<dbReference type="GO" id="GO:0022627">
    <property type="term" value="C:cytosolic small ribosomal subunit"/>
    <property type="evidence" value="ECO:0007669"/>
    <property type="project" value="TreeGrafter"/>
</dbReference>
<dbReference type="GO" id="GO:0070181">
    <property type="term" value="F:small ribosomal subunit rRNA binding"/>
    <property type="evidence" value="ECO:0007669"/>
    <property type="project" value="TreeGrafter"/>
</dbReference>
<dbReference type="GO" id="GO:0003735">
    <property type="term" value="F:structural constituent of ribosome"/>
    <property type="evidence" value="ECO:0007669"/>
    <property type="project" value="InterPro"/>
</dbReference>
<dbReference type="GO" id="GO:0006412">
    <property type="term" value="P:translation"/>
    <property type="evidence" value="ECO:0007669"/>
    <property type="project" value="UniProtKB-UniRule"/>
</dbReference>
<dbReference type="CDD" id="cd00473">
    <property type="entry name" value="bS6"/>
    <property type="match status" value="1"/>
</dbReference>
<dbReference type="Gene3D" id="3.30.70.60">
    <property type="match status" value="1"/>
</dbReference>
<dbReference type="HAMAP" id="MF_00360">
    <property type="entry name" value="Ribosomal_bS6"/>
    <property type="match status" value="1"/>
</dbReference>
<dbReference type="InterPro" id="IPR000529">
    <property type="entry name" value="Ribosomal_bS6"/>
</dbReference>
<dbReference type="InterPro" id="IPR035980">
    <property type="entry name" value="Ribosomal_bS6_sf"/>
</dbReference>
<dbReference type="InterPro" id="IPR020814">
    <property type="entry name" value="Ribosomal_S6_plastid/chlpt"/>
</dbReference>
<dbReference type="InterPro" id="IPR014717">
    <property type="entry name" value="Transl_elong_EF1B/ribsomal_bS6"/>
</dbReference>
<dbReference type="NCBIfam" id="TIGR00166">
    <property type="entry name" value="S6"/>
    <property type="match status" value="1"/>
</dbReference>
<dbReference type="PANTHER" id="PTHR21011">
    <property type="entry name" value="MITOCHONDRIAL 28S RIBOSOMAL PROTEIN S6"/>
    <property type="match status" value="1"/>
</dbReference>
<dbReference type="PANTHER" id="PTHR21011:SF1">
    <property type="entry name" value="SMALL RIBOSOMAL SUBUNIT PROTEIN BS6M"/>
    <property type="match status" value="1"/>
</dbReference>
<dbReference type="Pfam" id="PF01250">
    <property type="entry name" value="Ribosomal_S6"/>
    <property type="match status" value="1"/>
</dbReference>
<dbReference type="SUPFAM" id="SSF54995">
    <property type="entry name" value="Ribosomal protein S6"/>
    <property type="match status" value="1"/>
</dbReference>